<keyword id="KW-0997">Cell inner membrane</keyword>
<keyword id="KW-1003">Cell membrane</keyword>
<keyword id="KW-0472">Membrane</keyword>
<keyword id="KW-0520">NAD</keyword>
<keyword id="KW-0874">Quinone</keyword>
<keyword id="KW-1278">Translocase</keyword>
<keyword id="KW-0813">Transport</keyword>
<keyword id="KW-0830">Ubiquinone</keyword>
<sequence length="227" mass="26533">MTKNEYLIEKLQADLANHITELTSAYGEVTIECEVQNLLPVMIELRDREEFSFDQLIDLCGVDYLHYGDYDWETESATEHGFSRGVERQEAKAYAVNKPRFAVVYHLLSTQKNHRLRVKLFVEESHLIVPSVHHLWKSANWFEREAYDLYGILFDGHPDLRRLLTDYGFIGHPFRKDFPLSGEVEMRYDAKLQKVIYAPVDIVPRIVVPKVIRNDNRYIGNEGSKND</sequence>
<dbReference type="EC" id="7.1.1.-" evidence="1"/>
<dbReference type="EMBL" id="CP000675">
    <property type="protein sequence ID" value="ABQ56961.1"/>
    <property type="molecule type" value="Genomic_DNA"/>
</dbReference>
<dbReference type="RefSeq" id="WP_011947675.1">
    <property type="nucleotide sequence ID" value="NZ_JAPMSS010000004.1"/>
</dbReference>
<dbReference type="SMR" id="A5IHW1"/>
<dbReference type="KEGG" id="lpc:LPC_3073"/>
<dbReference type="HOGENOM" id="CLU_042628_2_1_6"/>
<dbReference type="GO" id="GO:0005886">
    <property type="term" value="C:plasma membrane"/>
    <property type="evidence" value="ECO:0007669"/>
    <property type="project" value="UniProtKB-SubCell"/>
</dbReference>
<dbReference type="GO" id="GO:0008137">
    <property type="term" value="F:NADH dehydrogenase (ubiquinone) activity"/>
    <property type="evidence" value="ECO:0007669"/>
    <property type="project" value="InterPro"/>
</dbReference>
<dbReference type="GO" id="GO:0050136">
    <property type="term" value="F:NADH:ubiquinone reductase (non-electrogenic) activity"/>
    <property type="evidence" value="ECO:0007669"/>
    <property type="project" value="UniProtKB-UniRule"/>
</dbReference>
<dbReference type="GO" id="GO:0048038">
    <property type="term" value="F:quinone binding"/>
    <property type="evidence" value="ECO:0007669"/>
    <property type="project" value="UniProtKB-KW"/>
</dbReference>
<dbReference type="Gene3D" id="3.30.460.80">
    <property type="entry name" value="NADH:ubiquinone oxidoreductase, 30kDa subunit"/>
    <property type="match status" value="1"/>
</dbReference>
<dbReference type="HAMAP" id="MF_01357">
    <property type="entry name" value="NDH1_NuoC"/>
    <property type="match status" value="1"/>
</dbReference>
<dbReference type="InterPro" id="IPR010218">
    <property type="entry name" value="NADH_DH_suC"/>
</dbReference>
<dbReference type="InterPro" id="IPR037232">
    <property type="entry name" value="NADH_quin_OxRdtase_su_C/D-like"/>
</dbReference>
<dbReference type="InterPro" id="IPR001268">
    <property type="entry name" value="NADH_UbQ_OxRdtase_30kDa_su"/>
</dbReference>
<dbReference type="InterPro" id="IPR020396">
    <property type="entry name" value="NADH_UbQ_OxRdtase_CS"/>
</dbReference>
<dbReference type="NCBIfam" id="TIGR01961">
    <property type="entry name" value="NuoC_fam"/>
    <property type="match status" value="1"/>
</dbReference>
<dbReference type="NCBIfam" id="NF004730">
    <property type="entry name" value="PRK06074.1-1"/>
    <property type="match status" value="1"/>
</dbReference>
<dbReference type="PANTHER" id="PTHR10884:SF14">
    <property type="entry name" value="NADH DEHYDROGENASE [UBIQUINONE] IRON-SULFUR PROTEIN 3, MITOCHONDRIAL"/>
    <property type="match status" value="1"/>
</dbReference>
<dbReference type="PANTHER" id="PTHR10884">
    <property type="entry name" value="NADH DEHYDROGENASE UBIQUINONE IRON-SULFUR PROTEIN 3"/>
    <property type="match status" value="1"/>
</dbReference>
<dbReference type="Pfam" id="PF00329">
    <property type="entry name" value="Complex1_30kDa"/>
    <property type="match status" value="1"/>
</dbReference>
<dbReference type="SUPFAM" id="SSF143243">
    <property type="entry name" value="Nqo5-like"/>
    <property type="match status" value="1"/>
</dbReference>
<dbReference type="PROSITE" id="PS00542">
    <property type="entry name" value="COMPLEX1_30K"/>
    <property type="match status" value="1"/>
</dbReference>
<name>NUOC_LEGPC</name>
<reference key="1">
    <citation type="submission" date="2006-11" db="EMBL/GenBank/DDBJ databases">
        <title>Identification and characterization of a new conjugation/ type IVA secretion system (trb/tra) of L. pneumophila Corby localized on a mobile genomic island.</title>
        <authorList>
            <person name="Gloeckner G."/>
            <person name="Albert-Weissenberger C."/>
            <person name="Weinmann E."/>
            <person name="Jacobi S."/>
            <person name="Schunder E."/>
            <person name="Steinert M."/>
            <person name="Buchrieser C."/>
            <person name="Hacker J."/>
            <person name="Heuner K."/>
        </authorList>
    </citation>
    <scope>NUCLEOTIDE SEQUENCE [LARGE SCALE GENOMIC DNA]</scope>
    <source>
        <strain>Corby</strain>
    </source>
</reference>
<gene>
    <name evidence="1" type="primary">nuoC</name>
    <name type="ordered locus">LPC_3073</name>
</gene>
<protein>
    <recommendedName>
        <fullName evidence="1">NADH-quinone oxidoreductase subunit C</fullName>
        <ecNumber evidence="1">7.1.1.-</ecNumber>
    </recommendedName>
    <alternativeName>
        <fullName evidence="1">NADH dehydrogenase I subunit C</fullName>
    </alternativeName>
    <alternativeName>
        <fullName evidence="1">NDH-1 subunit C</fullName>
    </alternativeName>
</protein>
<organism>
    <name type="scientific">Legionella pneumophila (strain Corby)</name>
    <dbReference type="NCBI Taxonomy" id="400673"/>
    <lineage>
        <taxon>Bacteria</taxon>
        <taxon>Pseudomonadati</taxon>
        <taxon>Pseudomonadota</taxon>
        <taxon>Gammaproteobacteria</taxon>
        <taxon>Legionellales</taxon>
        <taxon>Legionellaceae</taxon>
        <taxon>Legionella</taxon>
    </lineage>
</organism>
<comment type="function">
    <text evidence="1">NDH-1 shuttles electrons from NADH, via FMN and iron-sulfur (Fe-S) centers, to quinones in the respiratory chain. The immediate electron acceptor for the enzyme in this species is believed to be ubiquinone. Couples the redox reaction to proton translocation (for every two electrons transferred, four hydrogen ions are translocated across the cytoplasmic membrane), and thus conserves the redox energy in a proton gradient.</text>
</comment>
<comment type="catalytic activity">
    <reaction evidence="1">
        <text>a quinone + NADH + 5 H(+)(in) = a quinol + NAD(+) + 4 H(+)(out)</text>
        <dbReference type="Rhea" id="RHEA:57888"/>
        <dbReference type="ChEBI" id="CHEBI:15378"/>
        <dbReference type="ChEBI" id="CHEBI:24646"/>
        <dbReference type="ChEBI" id="CHEBI:57540"/>
        <dbReference type="ChEBI" id="CHEBI:57945"/>
        <dbReference type="ChEBI" id="CHEBI:132124"/>
    </reaction>
</comment>
<comment type="subunit">
    <text evidence="1">NDH-1 is composed of 14 different subunits. Subunits NuoB, C, D, E, F, and G constitute the peripheral sector of the complex.</text>
</comment>
<comment type="subcellular location">
    <subcellularLocation>
        <location evidence="1">Cell inner membrane</location>
        <topology evidence="1">Peripheral membrane protein</topology>
        <orientation evidence="1">Cytoplasmic side</orientation>
    </subcellularLocation>
</comment>
<comment type="similarity">
    <text evidence="1">Belongs to the complex I 30 kDa subunit family.</text>
</comment>
<feature type="chain" id="PRO_0000358115" description="NADH-quinone oxidoreductase subunit C">
    <location>
        <begin position="1"/>
        <end position="227"/>
    </location>
</feature>
<proteinExistence type="inferred from homology"/>
<evidence type="ECO:0000255" key="1">
    <source>
        <dbReference type="HAMAP-Rule" id="MF_01357"/>
    </source>
</evidence>
<accession>A5IHW1</accession>